<evidence type="ECO:0000255" key="1">
    <source>
        <dbReference type="HAMAP-Rule" id="MF_00014"/>
    </source>
</evidence>
<feature type="chain" id="PRO_1000001183" description="Ribosome maturation factor RimM">
    <location>
        <begin position="1"/>
        <end position="167"/>
    </location>
</feature>
<feature type="domain" description="PRC barrel" evidence="1">
    <location>
        <begin position="92"/>
        <end position="166"/>
    </location>
</feature>
<organism>
    <name type="scientific">Lactobacillus delbrueckii subsp. bulgaricus (strain ATCC 11842 / DSM 20081 / BCRC 10696 / JCM 1002 / NBRC 13953 / NCIMB 11778 / NCTC 12712 / WDCM 00102 / Lb 14)</name>
    <dbReference type="NCBI Taxonomy" id="390333"/>
    <lineage>
        <taxon>Bacteria</taxon>
        <taxon>Bacillati</taxon>
        <taxon>Bacillota</taxon>
        <taxon>Bacilli</taxon>
        <taxon>Lactobacillales</taxon>
        <taxon>Lactobacillaceae</taxon>
        <taxon>Lactobacillus</taxon>
    </lineage>
</organism>
<protein>
    <recommendedName>
        <fullName evidence="1">Ribosome maturation factor RimM</fullName>
    </recommendedName>
</protein>
<reference key="1">
    <citation type="journal article" date="2006" name="Proc. Natl. Acad. Sci. U.S.A.">
        <title>The complete genome sequence of Lactobacillus bulgaricus reveals extensive and ongoing reductive evolution.</title>
        <authorList>
            <person name="van de Guchte M."/>
            <person name="Penaud S."/>
            <person name="Grimaldi C."/>
            <person name="Barbe V."/>
            <person name="Bryson K."/>
            <person name="Nicolas P."/>
            <person name="Robert C."/>
            <person name="Oztas S."/>
            <person name="Mangenot S."/>
            <person name="Couloux A."/>
            <person name="Loux V."/>
            <person name="Dervyn R."/>
            <person name="Bossy R."/>
            <person name="Bolotin A."/>
            <person name="Batto J.-M."/>
            <person name="Walunas T."/>
            <person name="Gibrat J.-F."/>
            <person name="Bessieres P."/>
            <person name="Weissenbach J."/>
            <person name="Ehrlich S.D."/>
            <person name="Maguin E."/>
        </authorList>
    </citation>
    <scope>NUCLEOTIDE SEQUENCE [LARGE SCALE GENOMIC DNA]</scope>
    <source>
        <strain>ATCC 11842 / DSM 20081 / BCRC 10696 / JCM 1002 / NBRC 13953 / NCIMB 11778 / NCTC 12712 / WDCM 00102 / Lb 14</strain>
    </source>
</reference>
<sequence length="167" mass="18881">MNYYNVGKIIATHGLKGEVKVALTTDFPEDRFRAGSRLYLGDDSREVTVAAGRPFKQFWLVTFAEITDIDQAEKLKGTEILISEEDQGELPDGVYYYRELLGCKVLDDESGEEIGELTDIEAPGANDIWEVTDKNGKSFWLPYIPQVVKSVDIDKKEVRVELMEGLR</sequence>
<gene>
    <name evidence="1" type="primary">rimM</name>
    <name type="ordered locus">Ldb1370</name>
</gene>
<keyword id="KW-0143">Chaperone</keyword>
<keyword id="KW-0963">Cytoplasm</keyword>
<keyword id="KW-1185">Reference proteome</keyword>
<keyword id="KW-0690">Ribosome biogenesis</keyword>
<keyword id="KW-0698">rRNA processing</keyword>
<name>RIMM_LACDA</name>
<accession>Q1G9L3</accession>
<proteinExistence type="inferred from homology"/>
<comment type="function">
    <text evidence="1">An accessory protein needed during the final step in the assembly of 30S ribosomal subunit, possibly for assembly of the head region. Essential for efficient processing of 16S rRNA. May be needed both before and after RbfA during the maturation of 16S rRNA. It has affinity for free ribosomal 30S subunits but not for 70S ribosomes.</text>
</comment>
<comment type="subunit">
    <text evidence="1">Binds ribosomal protein uS19.</text>
</comment>
<comment type="subcellular location">
    <subcellularLocation>
        <location evidence="1">Cytoplasm</location>
    </subcellularLocation>
</comment>
<comment type="domain">
    <text evidence="1">The PRC barrel domain binds ribosomal protein uS19.</text>
</comment>
<comment type="similarity">
    <text evidence="1">Belongs to the RimM family.</text>
</comment>
<dbReference type="EMBL" id="CR954253">
    <property type="protein sequence ID" value="CAI98171.1"/>
    <property type="molecule type" value="Genomic_DNA"/>
</dbReference>
<dbReference type="RefSeq" id="WP_003618524.1">
    <property type="nucleotide sequence ID" value="NZ_JQAV01000006.1"/>
</dbReference>
<dbReference type="SMR" id="Q1G9L3"/>
<dbReference type="STRING" id="390333.Ldb1370"/>
<dbReference type="KEGG" id="ldb:Ldb1370"/>
<dbReference type="PATRIC" id="fig|390333.13.peg.1737"/>
<dbReference type="eggNOG" id="COG0806">
    <property type="taxonomic scope" value="Bacteria"/>
</dbReference>
<dbReference type="HOGENOM" id="CLU_077636_3_1_9"/>
<dbReference type="BioCyc" id="LDEL390333:LDB_RS05880-MONOMER"/>
<dbReference type="Proteomes" id="UP000001259">
    <property type="component" value="Chromosome"/>
</dbReference>
<dbReference type="GO" id="GO:0005737">
    <property type="term" value="C:cytoplasm"/>
    <property type="evidence" value="ECO:0007669"/>
    <property type="project" value="UniProtKB-SubCell"/>
</dbReference>
<dbReference type="GO" id="GO:0005840">
    <property type="term" value="C:ribosome"/>
    <property type="evidence" value="ECO:0007669"/>
    <property type="project" value="InterPro"/>
</dbReference>
<dbReference type="GO" id="GO:0043022">
    <property type="term" value="F:ribosome binding"/>
    <property type="evidence" value="ECO:0007669"/>
    <property type="project" value="InterPro"/>
</dbReference>
<dbReference type="GO" id="GO:0042274">
    <property type="term" value="P:ribosomal small subunit biogenesis"/>
    <property type="evidence" value="ECO:0007669"/>
    <property type="project" value="UniProtKB-UniRule"/>
</dbReference>
<dbReference type="GO" id="GO:0006364">
    <property type="term" value="P:rRNA processing"/>
    <property type="evidence" value="ECO:0007669"/>
    <property type="project" value="UniProtKB-UniRule"/>
</dbReference>
<dbReference type="Gene3D" id="2.30.30.240">
    <property type="entry name" value="PRC-barrel domain"/>
    <property type="match status" value="1"/>
</dbReference>
<dbReference type="Gene3D" id="2.40.30.60">
    <property type="entry name" value="RimM"/>
    <property type="match status" value="1"/>
</dbReference>
<dbReference type="HAMAP" id="MF_00014">
    <property type="entry name" value="Ribosome_mat_RimM"/>
    <property type="match status" value="1"/>
</dbReference>
<dbReference type="InterPro" id="IPR011033">
    <property type="entry name" value="PRC_barrel-like_sf"/>
</dbReference>
<dbReference type="InterPro" id="IPR056792">
    <property type="entry name" value="PRC_RimM"/>
</dbReference>
<dbReference type="InterPro" id="IPR011961">
    <property type="entry name" value="RimM"/>
</dbReference>
<dbReference type="InterPro" id="IPR002676">
    <property type="entry name" value="RimM_N"/>
</dbReference>
<dbReference type="InterPro" id="IPR036976">
    <property type="entry name" value="RimM_N_sf"/>
</dbReference>
<dbReference type="InterPro" id="IPR009000">
    <property type="entry name" value="Transl_B-barrel_sf"/>
</dbReference>
<dbReference type="NCBIfam" id="TIGR02273">
    <property type="entry name" value="16S_RimM"/>
    <property type="match status" value="1"/>
</dbReference>
<dbReference type="PANTHER" id="PTHR33692">
    <property type="entry name" value="RIBOSOME MATURATION FACTOR RIMM"/>
    <property type="match status" value="1"/>
</dbReference>
<dbReference type="PANTHER" id="PTHR33692:SF1">
    <property type="entry name" value="RIBOSOME MATURATION FACTOR RIMM"/>
    <property type="match status" value="1"/>
</dbReference>
<dbReference type="Pfam" id="PF24986">
    <property type="entry name" value="PRC_RimM"/>
    <property type="match status" value="1"/>
</dbReference>
<dbReference type="Pfam" id="PF01782">
    <property type="entry name" value="RimM"/>
    <property type="match status" value="1"/>
</dbReference>
<dbReference type="SUPFAM" id="SSF50346">
    <property type="entry name" value="PRC-barrel domain"/>
    <property type="match status" value="1"/>
</dbReference>
<dbReference type="SUPFAM" id="SSF50447">
    <property type="entry name" value="Translation proteins"/>
    <property type="match status" value="1"/>
</dbReference>